<gene>
    <name evidence="1" type="primary">rpsU</name>
    <name type="ordered locus">RBAM_023710</name>
</gene>
<accession>A7Z6V5</accession>
<evidence type="ECO:0000255" key="1">
    <source>
        <dbReference type="HAMAP-Rule" id="MF_00358"/>
    </source>
</evidence>
<evidence type="ECO:0000305" key="2"/>
<reference key="1">
    <citation type="journal article" date="2007" name="Nat. Biotechnol.">
        <title>Comparative analysis of the complete genome sequence of the plant growth-promoting bacterium Bacillus amyloliquefaciens FZB42.</title>
        <authorList>
            <person name="Chen X.H."/>
            <person name="Koumoutsi A."/>
            <person name="Scholz R."/>
            <person name="Eisenreich A."/>
            <person name="Schneider K."/>
            <person name="Heinemeyer I."/>
            <person name="Morgenstern B."/>
            <person name="Voss B."/>
            <person name="Hess W.R."/>
            <person name="Reva O."/>
            <person name="Junge H."/>
            <person name="Voigt B."/>
            <person name="Jungblut P.R."/>
            <person name="Vater J."/>
            <person name="Suessmuth R."/>
            <person name="Liesegang H."/>
            <person name="Strittmatter A."/>
            <person name="Gottschalk G."/>
            <person name="Borriss R."/>
        </authorList>
    </citation>
    <scope>NUCLEOTIDE SEQUENCE [LARGE SCALE GENOMIC DNA]</scope>
    <source>
        <strain>DSM 23117 / BGSC 10A6 / LMG 26770 / FZB42</strain>
    </source>
</reference>
<dbReference type="EMBL" id="CP000560">
    <property type="protein sequence ID" value="ABS74731.1"/>
    <property type="molecule type" value="Genomic_DNA"/>
</dbReference>
<dbReference type="RefSeq" id="WP_003152957.1">
    <property type="nucleotide sequence ID" value="NC_009725.2"/>
</dbReference>
<dbReference type="SMR" id="A7Z6V5"/>
<dbReference type="GeneID" id="93683773"/>
<dbReference type="KEGG" id="bay:RBAM_023710"/>
<dbReference type="HOGENOM" id="CLU_159258_3_2_9"/>
<dbReference type="Proteomes" id="UP000001120">
    <property type="component" value="Chromosome"/>
</dbReference>
<dbReference type="GO" id="GO:1990904">
    <property type="term" value="C:ribonucleoprotein complex"/>
    <property type="evidence" value="ECO:0007669"/>
    <property type="project" value="UniProtKB-KW"/>
</dbReference>
<dbReference type="GO" id="GO:0005840">
    <property type="term" value="C:ribosome"/>
    <property type="evidence" value="ECO:0007669"/>
    <property type="project" value="UniProtKB-KW"/>
</dbReference>
<dbReference type="GO" id="GO:0003735">
    <property type="term" value="F:structural constituent of ribosome"/>
    <property type="evidence" value="ECO:0007669"/>
    <property type="project" value="InterPro"/>
</dbReference>
<dbReference type="GO" id="GO:0006412">
    <property type="term" value="P:translation"/>
    <property type="evidence" value="ECO:0007669"/>
    <property type="project" value="UniProtKB-UniRule"/>
</dbReference>
<dbReference type="Gene3D" id="1.20.5.1150">
    <property type="entry name" value="Ribosomal protein S8"/>
    <property type="match status" value="1"/>
</dbReference>
<dbReference type="HAMAP" id="MF_00358">
    <property type="entry name" value="Ribosomal_bS21"/>
    <property type="match status" value="1"/>
</dbReference>
<dbReference type="InterPro" id="IPR001911">
    <property type="entry name" value="Ribosomal_bS21"/>
</dbReference>
<dbReference type="InterPro" id="IPR018278">
    <property type="entry name" value="Ribosomal_bS21_CS"/>
</dbReference>
<dbReference type="InterPro" id="IPR038380">
    <property type="entry name" value="Ribosomal_bS21_sf"/>
</dbReference>
<dbReference type="NCBIfam" id="TIGR00030">
    <property type="entry name" value="S21p"/>
    <property type="match status" value="1"/>
</dbReference>
<dbReference type="PANTHER" id="PTHR21109">
    <property type="entry name" value="MITOCHONDRIAL 28S RIBOSOMAL PROTEIN S21"/>
    <property type="match status" value="1"/>
</dbReference>
<dbReference type="PANTHER" id="PTHR21109:SF22">
    <property type="entry name" value="SMALL RIBOSOMAL SUBUNIT PROTEIN BS21"/>
    <property type="match status" value="1"/>
</dbReference>
<dbReference type="Pfam" id="PF01165">
    <property type="entry name" value="Ribosomal_S21"/>
    <property type="match status" value="1"/>
</dbReference>
<dbReference type="PRINTS" id="PR00976">
    <property type="entry name" value="RIBOSOMALS21"/>
</dbReference>
<dbReference type="PROSITE" id="PS01181">
    <property type="entry name" value="RIBOSOMAL_S21"/>
    <property type="match status" value="1"/>
</dbReference>
<sequence length="57" mass="6830">MSKTVVRKNESLEDALRRFKRSVSKTGTLQEARKREFYEKPSVKRKKKSEAARKRKF</sequence>
<keyword id="KW-0687">Ribonucleoprotein</keyword>
<keyword id="KW-0689">Ribosomal protein</keyword>
<organism>
    <name type="scientific">Bacillus velezensis (strain DSM 23117 / BGSC 10A6 / LMG 26770 / FZB42)</name>
    <name type="common">Bacillus amyloliquefaciens subsp. plantarum</name>
    <dbReference type="NCBI Taxonomy" id="326423"/>
    <lineage>
        <taxon>Bacteria</taxon>
        <taxon>Bacillati</taxon>
        <taxon>Bacillota</taxon>
        <taxon>Bacilli</taxon>
        <taxon>Bacillales</taxon>
        <taxon>Bacillaceae</taxon>
        <taxon>Bacillus</taxon>
        <taxon>Bacillus amyloliquefaciens group</taxon>
    </lineage>
</organism>
<name>RS21_BACVZ</name>
<feature type="chain" id="PRO_1000005095" description="Small ribosomal subunit protein bS21">
    <location>
        <begin position="1"/>
        <end position="57"/>
    </location>
</feature>
<protein>
    <recommendedName>
        <fullName evidence="1">Small ribosomal subunit protein bS21</fullName>
    </recommendedName>
    <alternativeName>
        <fullName evidence="2">30S ribosomal protein S21</fullName>
    </alternativeName>
</protein>
<comment type="similarity">
    <text evidence="1">Belongs to the bacterial ribosomal protein bS21 family.</text>
</comment>
<proteinExistence type="inferred from homology"/>